<proteinExistence type="inferred from homology"/>
<name>ZNTB_YERPS</name>
<reference key="1">
    <citation type="journal article" date="2004" name="Proc. Natl. Acad. Sci. U.S.A.">
        <title>Insights into the evolution of Yersinia pestis through whole-genome comparison with Yersinia pseudotuberculosis.</title>
        <authorList>
            <person name="Chain P.S.G."/>
            <person name="Carniel E."/>
            <person name="Larimer F.W."/>
            <person name="Lamerdin J."/>
            <person name="Stoutland P.O."/>
            <person name="Regala W.M."/>
            <person name="Georgescu A.M."/>
            <person name="Vergez L.M."/>
            <person name="Land M.L."/>
            <person name="Motin V.L."/>
            <person name="Brubaker R.R."/>
            <person name="Fowler J."/>
            <person name="Hinnebusch J."/>
            <person name="Marceau M."/>
            <person name="Medigue C."/>
            <person name="Simonet M."/>
            <person name="Chenal-Francisque V."/>
            <person name="Souza B."/>
            <person name="Dacheux D."/>
            <person name="Elliott J.M."/>
            <person name="Derbise A."/>
            <person name="Hauser L.J."/>
            <person name="Garcia E."/>
        </authorList>
    </citation>
    <scope>NUCLEOTIDE SEQUENCE [LARGE SCALE GENOMIC DNA]</scope>
    <source>
        <strain>IP32953</strain>
    </source>
</reference>
<keyword id="KW-0997">Cell inner membrane</keyword>
<keyword id="KW-1003">Cell membrane</keyword>
<keyword id="KW-0406">Ion transport</keyword>
<keyword id="KW-0472">Membrane</keyword>
<keyword id="KW-0812">Transmembrane</keyword>
<keyword id="KW-1133">Transmembrane helix</keyword>
<keyword id="KW-0813">Transport</keyword>
<keyword id="KW-0862">Zinc</keyword>
<dbReference type="EMBL" id="BX936398">
    <property type="protein sequence ID" value="CAH21495.1"/>
    <property type="molecule type" value="Genomic_DNA"/>
</dbReference>
<dbReference type="RefSeq" id="WP_002227906.1">
    <property type="nucleotide sequence ID" value="NZ_CP009712.1"/>
</dbReference>
<dbReference type="SMR" id="Q66A75"/>
<dbReference type="GeneID" id="57976336"/>
<dbReference type="KEGG" id="ypo:BZ17_204"/>
<dbReference type="KEGG" id="yps:YPTB2257"/>
<dbReference type="PATRIC" id="fig|273123.14.peg.211"/>
<dbReference type="Proteomes" id="UP000001011">
    <property type="component" value="Chromosome"/>
</dbReference>
<dbReference type="GO" id="GO:0005886">
    <property type="term" value="C:plasma membrane"/>
    <property type="evidence" value="ECO:0007669"/>
    <property type="project" value="UniProtKB-SubCell"/>
</dbReference>
<dbReference type="GO" id="GO:0050897">
    <property type="term" value="F:cobalt ion binding"/>
    <property type="evidence" value="ECO:0007669"/>
    <property type="project" value="TreeGrafter"/>
</dbReference>
<dbReference type="GO" id="GO:0015087">
    <property type="term" value="F:cobalt ion transmembrane transporter activity"/>
    <property type="evidence" value="ECO:0007669"/>
    <property type="project" value="TreeGrafter"/>
</dbReference>
<dbReference type="GO" id="GO:0000287">
    <property type="term" value="F:magnesium ion binding"/>
    <property type="evidence" value="ECO:0007669"/>
    <property type="project" value="TreeGrafter"/>
</dbReference>
<dbReference type="GO" id="GO:0015095">
    <property type="term" value="F:magnesium ion transmembrane transporter activity"/>
    <property type="evidence" value="ECO:0007669"/>
    <property type="project" value="TreeGrafter"/>
</dbReference>
<dbReference type="GO" id="GO:0005385">
    <property type="term" value="F:zinc ion transmembrane transporter activity"/>
    <property type="evidence" value="ECO:0007669"/>
    <property type="project" value="UniProtKB-UniRule"/>
</dbReference>
<dbReference type="CDD" id="cd12833">
    <property type="entry name" value="ZntB-like_1"/>
    <property type="match status" value="1"/>
</dbReference>
<dbReference type="Gene3D" id="3.30.460.20">
    <property type="entry name" value="CorA soluble domain-like"/>
    <property type="match status" value="1"/>
</dbReference>
<dbReference type="Gene3D" id="1.20.58.340">
    <property type="entry name" value="Magnesium transport protein CorA, transmembrane region"/>
    <property type="match status" value="2"/>
</dbReference>
<dbReference type="HAMAP" id="MF_01565">
    <property type="entry name" value="ZntB"/>
    <property type="match status" value="1"/>
</dbReference>
<dbReference type="InterPro" id="IPR045861">
    <property type="entry name" value="CorA_cytoplasmic_dom"/>
</dbReference>
<dbReference type="InterPro" id="IPR045863">
    <property type="entry name" value="CorA_TM1_TM2"/>
</dbReference>
<dbReference type="InterPro" id="IPR002523">
    <property type="entry name" value="MgTranspt_CorA/ZnTranspt_ZntB"/>
</dbReference>
<dbReference type="InterPro" id="IPR023714">
    <property type="entry name" value="Zn_transp_ZntB"/>
</dbReference>
<dbReference type="NCBIfam" id="NF007092">
    <property type="entry name" value="PRK09546.1"/>
    <property type="match status" value="1"/>
</dbReference>
<dbReference type="PANTHER" id="PTHR46494">
    <property type="entry name" value="CORA FAMILY METAL ION TRANSPORTER (EUROFUNG)"/>
    <property type="match status" value="1"/>
</dbReference>
<dbReference type="PANTHER" id="PTHR46494:SF3">
    <property type="entry name" value="ZINC TRANSPORT PROTEIN ZNTB"/>
    <property type="match status" value="1"/>
</dbReference>
<dbReference type="Pfam" id="PF01544">
    <property type="entry name" value="CorA"/>
    <property type="match status" value="1"/>
</dbReference>
<dbReference type="SUPFAM" id="SSF143865">
    <property type="entry name" value="CorA soluble domain-like"/>
    <property type="match status" value="1"/>
</dbReference>
<dbReference type="SUPFAM" id="SSF144083">
    <property type="entry name" value="Magnesium transport protein CorA, transmembrane region"/>
    <property type="match status" value="1"/>
</dbReference>
<comment type="function">
    <text evidence="1">Zinc transporter. Acts as a Zn(2+):proton symporter, which likely mediates zinc ion uptake.</text>
</comment>
<comment type="catalytic activity">
    <reaction evidence="1">
        <text>Zn(2+)(out) + H(+)(out) = Zn(2+)(in) + H(+)(in)</text>
        <dbReference type="Rhea" id="RHEA:71195"/>
        <dbReference type="ChEBI" id="CHEBI:15378"/>
        <dbReference type="ChEBI" id="CHEBI:29105"/>
    </reaction>
    <physiologicalReaction direction="left-to-right" evidence="1">
        <dbReference type="Rhea" id="RHEA:71196"/>
    </physiologicalReaction>
</comment>
<comment type="subcellular location">
    <subcellularLocation>
        <location evidence="1">Cell inner membrane</location>
        <topology evidence="1">Multi-pass membrane protein</topology>
    </subcellularLocation>
</comment>
<comment type="similarity">
    <text evidence="1">Belongs to the CorA metal ion transporter (MIT) (TC 1.A.35) family.</text>
</comment>
<feature type="chain" id="PRO_0000239253" description="Zinc transport protein ZntB">
    <location>
        <begin position="1"/>
        <end position="327"/>
    </location>
</feature>
<feature type="topological domain" description="Cytoplasmic" evidence="1">
    <location>
        <begin position="1"/>
        <end position="271"/>
    </location>
</feature>
<feature type="transmembrane region" description="Helical" evidence="1">
    <location>
        <begin position="272"/>
        <end position="292"/>
    </location>
</feature>
<feature type="topological domain" description="Periplasmic" evidence="1">
    <location>
        <begin position="293"/>
        <end position="300"/>
    </location>
</feature>
<feature type="transmembrane region" description="Helical" evidence="1">
    <location>
        <begin position="301"/>
        <end position="321"/>
    </location>
</feature>
<feature type="topological domain" description="Cytoplasmic" evidence="1">
    <location>
        <begin position="322"/>
        <end position="327"/>
    </location>
</feature>
<gene>
    <name evidence="1" type="primary">zntB</name>
    <name type="ordered locus">YPTB2257</name>
</gene>
<organism>
    <name type="scientific">Yersinia pseudotuberculosis serotype I (strain IP32953)</name>
    <dbReference type="NCBI Taxonomy" id="273123"/>
    <lineage>
        <taxon>Bacteria</taxon>
        <taxon>Pseudomonadati</taxon>
        <taxon>Pseudomonadota</taxon>
        <taxon>Gammaproteobacteria</taxon>
        <taxon>Enterobacterales</taxon>
        <taxon>Yersiniaceae</taxon>
        <taxon>Yersinia</taxon>
    </lineage>
</organism>
<protein>
    <recommendedName>
        <fullName evidence="1">Zinc transport protein ZntB</fullName>
    </recommendedName>
</protein>
<accession>Q66A75</accession>
<sequence length="327" mass="36701">MDVVEGKALQVSDAVYAYQLDGKGGMTAISVDAVASATQPCWLHLDYTYPESAEWLQNTPLLPEVVRDGLAGESMRPKITRLGDGTMITLRGINFNNDARPDQLVTIRVYMTDKLIVSTRHRKVYSIDNVLNDLQSGTGPTGSGHWLVDIADGLTDHTSEFIEDLHDKIIDLEDDLMEQKVPPRGQMALLRKQLIVLRRYMAPQRDVFSRLASERLPWMNDDDRRRMQEISERLGRGLEDLDGSIARTAVLSDEISSLMADAMNRRTYTMSLLAMVFLPTTFLTGLFGVNLGGIPGNTDAFGFTIFCMMLVVLVLSVAWWLKRSKWL</sequence>
<evidence type="ECO:0000255" key="1">
    <source>
        <dbReference type="HAMAP-Rule" id="MF_01565"/>
    </source>
</evidence>